<reference key="1">
    <citation type="journal article" date="2004" name="Genome Res.">
        <title>The status, quality, and expansion of the NIH full-length cDNA project: the Mammalian Gene Collection (MGC).</title>
        <authorList>
            <consortium name="The MGC Project Team"/>
        </authorList>
    </citation>
    <scope>NUCLEOTIDE SEQUENCE [LARGE SCALE MRNA]</scope>
    <source>
        <tissue>Kidney</tissue>
    </source>
</reference>
<sequence length="262" mass="29152">MALGIRCFRLLHPAFSSYLADLSRPVSEVPMKTVRGRQRDHIQYSAHPAVPVRQFATKKAKAKGKGQPQARVNINTALVEDIISLEEVDEDMKSVMEALKDNFNKTLNIRTAPGSLDHITVVTADGKLALNQIGQISMKSPQLILVNMASFPECTAAAIKAIRESGMNLNPEVEGTLIRVPIPKVTREHREMLVKLAKQNTNKAKENLRKVRTNAMNKLKKSKDKTSEDTIRLIEKQISQMADDTVAELDRHLAAKTKELLG</sequence>
<evidence type="ECO:0000250" key="1">
    <source>
        <dbReference type="UniProtKB" id="Q96E11"/>
    </source>
</evidence>
<evidence type="ECO:0000255" key="2"/>
<evidence type="ECO:0000305" key="3"/>
<keyword id="KW-0496">Mitochondrion</keyword>
<keyword id="KW-0648">Protein biosynthesis</keyword>
<keyword id="KW-1185">Reference proteome</keyword>
<keyword id="KW-0809">Transit peptide</keyword>
<dbReference type="EMBL" id="BC085779">
    <property type="protein sequence ID" value="AAH85779.1"/>
    <property type="molecule type" value="mRNA"/>
</dbReference>
<dbReference type="RefSeq" id="NP_001008355.1">
    <property type="nucleotide sequence ID" value="NM_001008354.1"/>
</dbReference>
<dbReference type="RefSeq" id="XP_038961194.1">
    <property type="nucleotide sequence ID" value="XM_039105266.2"/>
</dbReference>
<dbReference type="SMR" id="Q5RKI9"/>
<dbReference type="FunCoup" id="Q5RKI9">
    <property type="interactions" value="2163"/>
</dbReference>
<dbReference type="STRING" id="10116.ENSRNOP00000038041"/>
<dbReference type="iPTMnet" id="Q5RKI9"/>
<dbReference type="PhosphoSitePlus" id="Q5RKI9"/>
<dbReference type="jPOST" id="Q5RKI9"/>
<dbReference type="PaxDb" id="10116-ENSRNOP00000038041"/>
<dbReference type="Ensembl" id="ENSRNOT00000033047.4">
    <property type="protein sequence ID" value="ENSRNOP00000038041.3"/>
    <property type="gene ID" value="ENSRNOG00000025997.4"/>
</dbReference>
<dbReference type="GeneID" id="311903"/>
<dbReference type="KEGG" id="rno:311903"/>
<dbReference type="UCSC" id="RGD:1305897">
    <property type="organism name" value="rat"/>
</dbReference>
<dbReference type="AGR" id="RGD:1305897"/>
<dbReference type="CTD" id="92399"/>
<dbReference type="RGD" id="1305897">
    <property type="gene designation" value="Mrrf"/>
</dbReference>
<dbReference type="eggNOG" id="KOG4759">
    <property type="taxonomic scope" value="Eukaryota"/>
</dbReference>
<dbReference type="GeneTree" id="ENSGT00390000005084"/>
<dbReference type="HOGENOM" id="CLU_073981_4_1_1"/>
<dbReference type="InParanoid" id="Q5RKI9"/>
<dbReference type="OMA" id="FNPMNNG"/>
<dbReference type="OrthoDB" id="407355at2759"/>
<dbReference type="PhylomeDB" id="Q5RKI9"/>
<dbReference type="TreeFam" id="TF323691"/>
<dbReference type="Reactome" id="R-RNO-5419276">
    <property type="pathway name" value="Mitochondrial translation termination"/>
</dbReference>
<dbReference type="PRO" id="PR:Q5RKI9"/>
<dbReference type="Proteomes" id="UP000002494">
    <property type="component" value="Chromosome 3"/>
</dbReference>
<dbReference type="Bgee" id="ENSRNOG00000025997">
    <property type="expression patterns" value="Expressed in heart and 19 other cell types or tissues"/>
</dbReference>
<dbReference type="GO" id="GO:0005739">
    <property type="term" value="C:mitochondrion"/>
    <property type="evidence" value="ECO:0000250"/>
    <property type="project" value="UniProtKB"/>
</dbReference>
<dbReference type="GO" id="GO:0043023">
    <property type="term" value="F:ribosomal large subunit binding"/>
    <property type="evidence" value="ECO:0000318"/>
    <property type="project" value="GO_Central"/>
</dbReference>
<dbReference type="GO" id="GO:0032790">
    <property type="term" value="P:ribosome disassembly"/>
    <property type="evidence" value="ECO:0000250"/>
    <property type="project" value="UniProtKB"/>
</dbReference>
<dbReference type="GO" id="GO:0006412">
    <property type="term" value="P:translation"/>
    <property type="evidence" value="ECO:0000318"/>
    <property type="project" value="GO_Central"/>
</dbReference>
<dbReference type="FunFam" id="3.30.1360.40:FF:000007">
    <property type="entry name" value="ribosome-recycling factor, mitochondrial isoform X1"/>
    <property type="match status" value="1"/>
</dbReference>
<dbReference type="FunFam" id="1.10.132.20:FF:000003">
    <property type="entry name" value="ribosome-recycling factor, mitochondrial isoform X2"/>
    <property type="match status" value="1"/>
</dbReference>
<dbReference type="Gene3D" id="3.30.1360.40">
    <property type="match status" value="1"/>
</dbReference>
<dbReference type="Gene3D" id="1.10.132.20">
    <property type="entry name" value="Ribosome-recycling factor"/>
    <property type="match status" value="1"/>
</dbReference>
<dbReference type="InterPro" id="IPR002661">
    <property type="entry name" value="Ribosome_recyc_fac"/>
</dbReference>
<dbReference type="InterPro" id="IPR023584">
    <property type="entry name" value="Ribosome_recyc_fac_dom"/>
</dbReference>
<dbReference type="InterPro" id="IPR036191">
    <property type="entry name" value="RRF_sf"/>
</dbReference>
<dbReference type="PANTHER" id="PTHR20982">
    <property type="entry name" value="RIBOSOME RECYCLING FACTOR"/>
    <property type="match status" value="1"/>
</dbReference>
<dbReference type="PANTHER" id="PTHR20982:SF10">
    <property type="entry name" value="RIBOSOME-RECYCLING FACTOR, MITOCHONDRIAL"/>
    <property type="match status" value="1"/>
</dbReference>
<dbReference type="Pfam" id="PF01765">
    <property type="entry name" value="RRF"/>
    <property type="match status" value="1"/>
</dbReference>
<dbReference type="SUPFAM" id="SSF55194">
    <property type="entry name" value="Ribosome recycling factor, RRF"/>
    <property type="match status" value="1"/>
</dbReference>
<comment type="function">
    <text evidence="1">Responsible for the disassembly of ribosomes from messenger RNA at the termination of mitochondrial protein biosynthesis. Acts in collaboration with GFM2. Promotes mitochondrial ribosome recycling by dissolution of intersubunit contacts.</text>
</comment>
<comment type="subcellular location">
    <subcellularLocation>
        <location evidence="1">Mitochondrion</location>
    </subcellularLocation>
</comment>
<comment type="similarity">
    <text evidence="3">Belongs to the RRF family.</text>
</comment>
<protein>
    <recommendedName>
        <fullName>Ribosome-recycling factor, mitochondrial</fullName>
        <shortName>RRF</shortName>
    </recommendedName>
    <alternativeName>
        <fullName>Ribosome-releasing factor, mitochondrial</fullName>
    </alternativeName>
</protein>
<proteinExistence type="evidence at transcript level"/>
<name>RRFM_RAT</name>
<organism>
    <name type="scientific">Rattus norvegicus</name>
    <name type="common">Rat</name>
    <dbReference type="NCBI Taxonomy" id="10116"/>
    <lineage>
        <taxon>Eukaryota</taxon>
        <taxon>Metazoa</taxon>
        <taxon>Chordata</taxon>
        <taxon>Craniata</taxon>
        <taxon>Vertebrata</taxon>
        <taxon>Euteleostomi</taxon>
        <taxon>Mammalia</taxon>
        <taxon>Eutheria</taxon>
        <taxon>Euarchontoglires</taxon>
        <taxon>Glires</taxon>
        <taxon>Rodentia</taxon>
        <taxon>Myomorpha</taxon>
        <taxon>Muroidea</taxon>
        <taxon>Muridae</taxon>
        <taxon>Murinae</taxon>
        <taxon>Rattus</taxon>
    </lineage>
</organism>
<accession>Q5RKI9</accession>
<gene>
    <name type="primary">Mrrf</name>
</gene>
<feature type="transit peptide" description="Mitochondrion" evidence="2">
    <location>
        <begin position="1"/>
        <end position="55"/>
    </location>
</feature>
<feature type="chain" id="PRO_0000031082" description="Ribosome-recycling factor, mitochondrial">
    <location>
        <begin position="56"/>
        <end position="262"/>
    </location>
</feature>